<name>PYR1_EMENI</name>
<evidence type="ECO:0000250" key="1">
    <source>
        <dbReference type="UniProtKB" id="P00968"/>
    </source>
</evidence>
<evidence type="ECO:0000250" key="2">
    <source>
        <dbReference type="UniProtKB" id="P07259"/>
    </source>
</evidence>
<evidence type="ECO:0000250" key="3">
    <source>
        <dbReference type="UniProtKB" id="P08955"/>
    </source>
</evidence>
<evidence type="ECO:0000250" key="4">
    <source>
        <dbReference type="UniProtKB" id="P0A6F1"/>
    </source>
</evidence>
<evidence type="ECO:0000250" key="5">
    <source>
        <dbReference type="UniProtKB" id="P0A786"/>
    </source>
</evidence>
<evidence type="ECO:0000255" key="6">
    <source>
        <dbReference type="PROSITE-ProRule" id="PRU00409"/>
    </source>
</evidence>
<evidence type="ECO:0000255" key="7">
    <source>
        <dbReference type="PROSITE-ProRule" id="PRU00605"/>
    </source>
</evidence>
<evidence type="ECO:0000255" key="8">
    <source>
        <dbReference type="PROSITE-ProRule" id="PRU01202"/>
    </source>
</evidence>
<evidence type="ECO:0000256" key="9">
    <source>
        <dbReference type="SAM" id="MobiDB-lite"/>
    </source>
</evidence>
<evidence type="ECO:0000305" key="10"/>
<evidence type="ECO:0000305" key="11">
    <source>
    </source>
</evidence>
<evidence type="ECO:0000312" key="12">
    <source>
        <dbReference type="EMBL" id="AAD09129.1"/>
    </source>
</evidence>
<gene>
    <name evidence="12" type="primary">pyrABCN</name>
    <name type="ORF">AN0565</name>
</gene>
<organism>
    <name type="scientific">Emericella nidulans (strain FGSC A4 / ATCC 38163 / CBS 112.46 / NRRL 194 / M139)</name>
    <name type="common">Aspergillus nidulans</name>
    <dbReference type="NCBI Taxonomy" id="227321"/>
    <lineage>
        <taxon>Eukaryota</taxon>
        <taxon>Fungi</taxon>
        <taxon>Dikarya</taxon>
        <taxon>Ascomycota</taxon>
        <taxon>Pezizomycotina</taxon>
        <taxon>Eurotiomycetes</taxon>
        <taxon>Eurotiomycetidae</taxon>
        <taxon>Eurotiales</taxon>
        <taxon>Aspergillaceae</taxon>
        <taxon>Aspergillus</taxon>
        <taxon>Aspergillus subgen. Nidulantes</taxon>
    </lineage>
</organism>
<accession>O93937</accession>
<accession>C8VSK1</accession>
<accession>Q5BFW5</accession>
<protein>
    <recommendedName>
        <fullName>Multifunctional protein pyrABCN</fullName>
    </recommendedName>
    <alternativeName>
        <fullName>Pyrimidine-specific carbamoyl phosphate synthase-aspartate carbamoyl transferase</fullName>
        <shortName>CPSase-ATCase</shortName>
    </alternativeName>
    <domain>
        <recommendedName>
            <fullName>Glutamine-dependent carbamoyl phosphate synthase</fullName>
            <ecNumber>6.3.5.5</ecNumber>
        </recommendedName>
        <alternativeName>
            <fullName>Carbamoyl phosphate synthase P</fullName>
            <shortName>CPS-P</shortName>
            <shortName>CPS-pyr</shortName>
            <shortName>CPSase P</shortName>
        </alternativeName>
        <alternativeName>
            <fullName>Pyrimidine-specific carbamoyl phosphate synthase</fullName>
        </alternativeName>
    </domain>
    <domain>
        <recommendedName>
            <fullName>Glutamine amidotransferase</fullName>
            <shortName>GATase</shortName>
            <shortName>GLNase</shortName>
            <ecNumber>3.5.1.2</ecNumber>
        </recommendedName>
    </domain>
    <domain>
        <recommendedName>
            <fullName>Ammonium-dependent carbamoyl phosphate synthase</fullName>
            <shortName>CPS</shortName>
            <shortName>CPSase</shortName>
            <ecNumber>6.3.4.16</ecNumber>
        </recommendedName>
    </domain>
    <domain>
        <recommendedName>
            <fullName>Aspartate carbamoyltransferase</fullName>
            <shortName>ATCase</shortName>
            <ecNumber>2.1.3.2</ecNumber>
        </recommendedName>
        <alternativeName>
            <fullName>Aspartate transcarbamylase</fullName>
        </alternativeName>
    </domain>
</protein>
<dbReference type="EC" id="6.3.5.5"/>
<dbReference type="EC" id="3.5.1.2"/>
<dbReference type="EC" id="6.3.4.16"/>
<dbReference type="EC" id="2.1.3.2"/>
<dbReference type="EMBL" id="AF112473">
    <property type="protein sequence ID" value="AAD09129.1"/>
    <property type="molecule type" value="Genomic_DNA"/>
</dbReference>
<dbReference type="EMBL" id="AACD01000007">
    <property type="protein sequence ID" value="EAA66664.1"/>
    <property type="molecule type" value="Genomic_DNA"/>
</dbReference>
<dbReference type="EMBL" id="BN001308">
    <property type="protein sequence ID" value="CBF89223.1"/>
    <property type="molecule type" value="Genomic_DNA"/>
</dbReference>
<dbReference type="RefSeq" id="XP_658169.1">
    <property type="nucleotide sequence ID" value="XM_653077.1"/>
</dbReference>
<dbReference type="SMR" id="O93937"/>
<dbReference type="FunCoup" id="O93937">
    <property type="interactions" value="1518"/>
</dbReference>
<dbReference type="STRING" id="227321.O93937"/>
<dbReference type="MEROPS" id="C26.956"/>
<dbReference type="EnsemblFungi" id="CBF89223">
    <property type="protein sequence ID" value="CBF89223"/>
    <property type="gene ID" value="ANIA_00565"/>
</dbReference>
<dbReference type="KEGG" id="ani:ANIA_00565"/>
<dbReference type="eggNOG" id="KOG0370">
    <property type="taxonomic scope" value="Eukaryota"/>
</dbReference>
<dbReference type="HOGENOM" id="CLU_000513_2_1_1"/>
<dbReference type="InParanoid" id="O93937"/>
<dbReference type="OMA" id="WSPFNGK"/>
<dbReference type="OrthoDB" id="1924069at2759"/>
<dbReference type="UniPathway" id="UPA00070">
    <property type="reaction ID" value="UER00115"/>
</dbReference>
<dbReference type="UniPathway" id="UPA00070">
    <property type="reaction ID" value="UER00116"/>
</dbReference>
<dbReference type="Proteomes" id="UP000000560">
    <property type="component" value="Chromosome VIII"/>
</dbReference>
<dbReference type="GO" id="GO:0005737">
    <property type="term" value="C:cytoplasm"/>
    <property type="evidence" value="ECO:0000318"/>
    <property type="project" value="GO_Central"/>
</dbReference>
<dbReference type="GO" id="GO:0005829">
    <property type="term" value="C:cytosol"/>
    <property type="evidence" value="ECO:0000318"/>
    <property type="project" value="GO_Central"/>
</dbReference>
<dbReference type="GO" id="GO:0016597">
    <property type="term" value="F:amino acid binding"/>
    <property type="evidence" value="ECO:0007669"/>
    <property type="project" value="InterPro"/>
</dbReference>
<dbReference type="GO" id="GO:0004070">
    <property type="term" value="F:aspartate carbamoyltransferase activity"/>
    <property type="evidence" value="ECO:0000318"/>
    <property type="project" value="GO_Central"/>
</dbReference>
<dbReference type="GO" id="GO:0005524">
    <property type="term" value="F:ATP binding"/>
    <property type="evidence" value="ECO:0007669"/>
    <property type="project" value="UniProtKB-KW"/>
</dbReference>
<dbReference type="GO" id="GO:0004087">
    <property type="term" value="F:carbamoyl-phosphate synthase (ammonia) activity"/>
    <property type="evidence" value="ECO:0007669"/>
    <property type="project" value="RHEA"/>
</dbReference>
<dbReference type="GO" id="GO:0004088">
    <property type="term" value="F:carbamoyl-phosphate synthase (glutamine-hydrolyzing) activity"/>
    <property type="evidence" value="ECO:0000304"/>
    <property type="project" value="UniProtKB"/>
</dbReference>
<dbReference type="GO" id="GO:0004359">
    <property type="term" value="F:glutaminase activity"/>
    <property type="evidence" value="ECO:0007669"/>
    <property type="project" value="RHEA"/>
</dbReference>
<dbReference type="GO" id="GO:0046872">
    <property type="term" value="F:metal ion binding"/>
    <property type="evidence" value="ECO:0007669"/>
    <property type="project" value="InterPro"/>
</dbReference>
<dbReference type="GO" id="GO:0006207">
    <property type="term" value="P:'de novo' pyrimidine nucleobase biosynthetic process"/>
    <property type="evidence" value="ECO:0000318"/>
    <property type="project" value="GO_Central"/>
</dbReference>
<dbReference type="GO" id="GO:0044205">
    <property type="term" value="P:'de novo' UMP biosynthetic process"/>
    <property type="evidence" value="ECO:0007669"/>
    <property type="project" value="UniProtKB-UniPathway"/>
</dbReference>
<dbReference type="GO" id="GO:0006541">
    <property type="term" value="P:glutamine metabolic process"/>
    <property type="evidence" value="ECO:0000318"/>
    <property type="project" value="GO_Central"/>
</dbReference>
<dbReference type="CDD" id="cd01316">
    <property type="entry name" value="CAD_DHOase"/>
    <property type="match status" value="1"/>
</dbReference>
<dbReference type="CDD" id="cd01744">
    <property type="entry name" value="GATase1_CPSase"/>
    <property type="match status" value="1"/>
</dbReference>
<dbReference type="CDD" id="cd01423">
    <property type="entry name" value="MGS_CPS_I_III"/>
    <property type="match status" value="1"/>
</dbReference>
<dbReference type="FunFam" id="3.40.50.1370:FF:000002">
    <property type="entry name" value="Aspartate carbamoyltransferase 2"/>
    <property type="match status" value="1"/>
</dbReference>
<dbReference type="FunFam" id="3.40.50.20:FF:000036">
    <property type="entry name" value="Aspartate carbamoyltransferase catalytic subunit"/>
    <property type="match status" value="1"/>
</dbReference>
<dbReference type="FunFam" id="3.40.50.880:FF:000025">
    <property type="entry name" value="Bifunctional pyrimidine biosynthesis protein"/>
    <property type="match status" value="1"/>
</dbReference>
<dbReference type="FunFam" id="3.40.50.1370:FF:000005">
    <property type="entry name" value="CAD protein-like isoform X1"/>
    <property type="match status" value="1"/>
</dbReference>
<dbReference type="FunFam" id="3.30.470.20:FF:000004">
    <property type="entry name" value="Carbamoyl-phosphate synthase (glutamine-hydrolyzing)"/>
    <property type="match status" value="1"/>
</dbReference>
<dbReference type="FunFam" id="3.50.30.20:FF:000002">
    <property type="entry name" value="Carbamoyl-phosphate synthase 1, mitochondrial"/>
    <property type="match status" value="1"/>
</dbReference>
<dbReference type="FunFam" id="1.10.1030.10:FF:000001">
    <property type="entry name" value="Carbamoyl-phosphate synthase large chain"/>
    <property type="match status" value="1"/>
</dbReference>
<dbReference type="FunFam" id="3.20.20.140:FF:000036">
    <property type="entry name" value="Carbamoyl-phosphate synthase large chain"/>
    <property type="match status" value="1"/>
</dbReference>
<dbReference type="FunFam" id="3.30.1490.20:FF:000001">
    <property type="entry name" value="Carbamoyl-phosphate synthase large chain"/>
    <property type="match status" value="1"/>
</dbReference>
<dbReference type="FunFam" id="3.30.470.20:FF:000001">
    <property type="entry name" value="Carbamoyl-phosphate synthase large chain"/>
    <property type="match status" value="1"/>
</dbReference>
<dbReference type="FunFam" id="3.40.50.20:FF:000002">
    <property type="entry name" value="Carbamoyl-phosphate synthase large chain"/>
    <property type="match status" value="1"/>
</dbReference>
<dbReference type="FunFam" id="3.40.50.1380:FF:000009">
    <property type="entry name" value="Carbamoyl-phosphate synthase, large subunit"/>
    <property type="match status" value="1"/>
</dbReference>
<dbReference type="Gene3D" id="3.40.50.20">
    <property type="match status" value="2"/>
</dbReference>
<dbReference type="Gene3D" id="3.40.50.880">
    <property type="match status" value="1"/>
</dbReference>
<dbReference type="Gene3D" id="3.40.50.1370">
    <property type="entry name" value="Aspartate/ornithine carbamoyltransferase"/>
    <property type="match status" value="2"/>
</dbReference>
<dbReference type="Gene3D" id="3.30.1490.20">
    <property type="entry name" value="ATP-grasp fold, A domain"/>
    <property type="match status" value="1"/>
</dbReference>
<dbReference type="Gene3D" id="3.30.470.20">
    <property type="entry name" value="ATP-grasp fold, B domain"/>
    <property type="match status" value="2"/>
</dbReference>
<dbReference type="Gene3D" id="3.50.30.20">
    <property type="entry name" value="Carbamoyl-phosphate synthase small subunit, N-terminal domain"/>
    <property type="match status" value="1"/>
</dbReference>
<dbReference type="Gene3D" id="1.10.1030.10">
    <property type="entry name" value="Carbamoyl-phosphate synthetase, large subunit oligomerisation domain"/>
    <property type="match status" value="1"/>
</dbReference>
<dbReference type="Gene3D" id="3.20.20.140">
    <property type="entry name" value="Metal-dependent hydrolases"/>
    <property type="match status" value="1"/>
</dbReference>
<dbReference type="Gene3D" id="3.40.50.1380">
    <property type="entry name" value="Methylglyoxal synthase-like domain"/>
    <property type="match status" value="1"/>
</dbReference>
<dbReference type="HAMAP" id="MF_01209">
    <property type="entry name" value="CPSase_S_chain"/>
    <property type="match status" value="1"/>
</dbReference>
<dbReference type="InterPro" id="IPR006132">
    <property type="entry name" value="Asp/Orn_carbamoyltranf_P-bd"/>
</dbReference>
<dbReference type="InterPro" id="IPR006130">
    <property type="entry name" value="Asp/Orn_carbamoylTrfase"/>
</dbReference>
<dbReference type="InterPro" id="IPR036901">
    <property type="entry name" value="Asp/Orn_carbamoylTrfase_sf"/>
</dbReference>
<dbReference type="InterPro" id="IPR002082">
    <property type="entry name" value="Asp_carbamoyltransf"/>
</dbReference>
<dbReference type="InterPro" id="IPR006131">
    <property type="entry name" value="Asp_carbamoyltransf_Asp/Orn-bd"/>
</dbReference>
<dbReference type="InterPro" id="IPR011761">
    <property type="entry name" value="ATP-grasp"/>
</dbReference>
<dbReference type="InterPro" id="IPR013815">
    <property type="entry name" value="ATP_grasp_subdomain_1"/>
</dbReference>
<dbReference type="InterPro" id="IPR006275">
    <property type="entry name" value="CarbamoylP_synth_lsu"/>
</dbReference>
<dbReference type="InterPro" id="IPR005480">
    <property type="entry name" value="CarbamoylP_synth_lsu_oligo"/>
</dbReference>
<dbReference type="InterPro" id="IPR036897">
    <property type="entry name" value="CarbamoylP_synth_lsu_oligo_sf"/>
</dbReference>
<dbReference type="InterPro" id="IPR006274">
    <property type="entry name" value="CarbamoylP_synth_ssu"/>
</dbReference>
<dbReference type="InterPro" id="IPR002474">
    <property type="entry name" value="CarbamoylP_synth_ssu_N"/>
</dbReference>
<dbReference type="InterPro" id="IPR036480">
    <property type="entry name" value="CarbP_synth_ssu_N_sf"/>
</dbReference>
<dbReference type="InterPro" id="IPR005479">
    <property type="entry name" value="CbamoylP_synth_lsu-like_ATP-bd"/>
</dbReference>
<dbReference type="InterPro" id="IPR005483">
    <property type="entry name" value="CbamoylP_synth_lsu_CPSase_dom"/>
</dbReference>
<dbReference type="InterPro" id="IPR029062">
    <property type="entry name" value="Class_I_gatase-like"/>
</dbReference>
<dbReference type="InterPro" id="IPR035686">
    <property type="entry name" value="CPSase_GATase1"/>
</dbReference>
<dbReference type="InterPro" id="IPR017926">
    <property type="entry name" value="GATASE"/>
</dbReference>
<dbReference type="InterPro" id="IPR032466">
    <property type="entry name" value="Metal_Hydrolase"/>
</dbReference>
<dbReference type="InterPro" id="IPR011607">
    <property type="entry name" value="MGS-like_dom"/>
</dbReference>
<dbReference type="InterPro" id="IPR036914">
    <property type="entry name" value="MGS-like_dom_sf"/>
</dbReference>
<dbReference type="InterPro" id="IPR016185">
    <property type="entry name" value="PreATP-grasp_dom_sf"/>
</dbReference>
<dbReference type="NCBIfam" id="TIGR00670">
    <property type="entry name" value="asp_carb_tr"/>
    <property type="match status" value="1"/>
</dbReference>
<dbReference type="NCBIfam" id="TIGR01369">
    <property type="entry name" value="CPSaseII_lrg"/>
    <property type="match status" value="1"/>
</dbReference>
<dbReference type="NCBIfam" id="TIGR01368">
    <property type="entry name" value="CPSaseIIsmall"/>
    <property type="match status" value="1"/>
</dbReference>
<dbReference type="NCBIfam" id="NF002032">
    <property type="entry name" value="PRK00856.1"/>
    <property type="match status" value="1"/>
</dbReference>
<dbReference type="NCBIfam" id="NF003671">
    <property type="entry name" value="PRK05294.1"/>
    <property type="match status" value="1"/>
</dbReference>
<dbReference type="NCBIfam" id="NF009455">
    <property type="entry name" value="PRK12815.1"/>
    <property type="match status" value="1"/>
</dbReference>
<dbReference type="NCBIfam" id="NF009475">
    <property type="entry name" value="PRK12838.1"/>
    <property type="match status" value="1"/>
</dbReference>
<dbReference type="PANTHER" id="PTHR11405:SF4">
    <property type="entry name" value="CARBAMOYL-PHOSPHATE SYNTHASE ARGININE-SPECIFIC SMALL CHAIN"/>
    <property type="match status" value="1"/>
</dbReference>
<dbReference type="PANTHER" id="PTHR11405">
    <property type="entry name" value="CARBAMOYLTRANSFERASE FAMILY MEMBER"/>
    <property type="match status" value="1"/>
</dbReference>
<dbReference type="Pfam" id="PF02786">
    <property type="entry name" value="CPSase_L_D2"/>
    <property type="match status" value="2"/>
</dbReference>
<dbReference type="Pfam" id="PF02787">
    <property type="entry name" value="CPSase_L_D3"/>
    <property type="match status" value="1"/>
</dbReference>
<dbReference type="Pfam" id="PF00988">
    <property type="entry name" value="CPSase_sm_chain"/>
    <property type="match status" value="1"/>
</dbReference>
<dbReference type="Pfam" id="PF00117">
    <property type="entry name" value="GATase"/>
    <property type="match status" value="1"/>
</dbReference>
<dbReference type="Pfam" id="PF02142">
    <property type="entry name" value="MGS"/>
    <property type="match status" value="1"/>
</dbReference>
<dbReference type="Pfam" id="PF00185">
    <property type="entry name" value="OTCace"/>
    <property type="match status" value="1"/>
</dbReference>
<dbReference type="Pfam" id="PF02729">
    <property type="entry name" value="OTCace_N"/>
    <property type="match status" value="1"/>
</dbReference>
<dbReference type="PRINTS" id="PR00100">
    <property type="entry name" value="AOTCASE"/>
</dbReference>
<dbReference type="PRINTS" id="PR00101">
    <property type="entry name" value="ATCASE"/>
</dbReference>
<dbReference type="PRINTS" id="PR00098">
    <property type="entry name" value="CPSASE"/>
</dbReference>
<dbReference type="PRINTS" id="PR00099">
    <property type="entry name" value="CPSGATASE"/>
</dbReference>
<dbReference type="SMART" id="SM01096">
    <property type="entry name" value="CPSase_L_D3"/>
    <property type="match status" value="1"/>
</dbReference>
<dbReference type="SMART" id="SM01097">
    <property type="entry name" value="CPSase_sm_chain"/>
    <property type="match status" value="1"/>
</dbReference>
<dbReference type="SMART" id="SM00851">
    <property type="entry name" value="MGS"/>
    <property type="match status" value="1"/>
</dbReference>
<dbReference type="SUPFAM" id="SSF53671">
    <property type="entry name" value="Aspartate/ornithine carbamoyltransferase"/>
    <property type="match status" value="1"/>
</dbReference>
<dbReference type="SUPFAM" id="SSF48108">
    <property type="entry name" value="Carbamoyl phosphate synthetase, large subunit connection domain"/>
    <property type="match status" value="1"/>
</dbReference>
<dbReference type="SUPFAM" id="SSF52021">
    <property type="entry name" value="Carbamoyl phosphate synthetase, small subunit N-terminal domain"/>
    <property type="match status" value="1"/>
</dbReference>
<dbReference type="SUPFAM" id="SSF52317">
    <property type="entry name" value="Class I glutamine amidotransferase-like"/>
    <property type="match status" value="1"/>
</dbReference>
<dbReference type="SUPFAM" id="SSF56059">
    <property type="entry name" value="Glutathione synthetase ATP-binding domain-like"/>
    <property type="match status" value="2"/>
</dbReference>
<dbReference type="SUPFAM" id="SSF51556">
    <property type="entry name" value="Metallo-dependent hydrolases"/>
    <property type="match status" value="1"/>
</dbReference>
<dbReference type="SUPFAM" id="SSF52335">
    <property type="entry name" value="Methylglyoxal synthase-like"/>
    <property type="match status" value="1"/>
</dbReference>
<dbReference type="SUPFAM" id="SSF52440">
    <property type="entry name" value="PreATP-grasp domain"/>
    <property type="match status" value="2"/>
</dbReference>
<dbReference type="PROSITE" id="PS50975">
    <property type="entry name" value="ATP_GRASP"/>
    <property type="match status" value="2"/>
</dbReference>
<dbReference type="PROSITE" id="PS00097">
    <property type="entry name" value="CARBAMOYLTRANSFERASE"/>
    <property type="match status" value="1"/>
</dbReference>
<dbReference type="PROSITE" id="PS00866">
    <property type="entry name" value="CPSASE_1"/>
    <property type="match status" value="2"/>
</dbReference>
<dbReference type="PROSITE" id="PS00867">
    <property type="entry name" value="CPSASE_2"/>
    <property type="match status" value="2"/>
</dbReference>
<dbReference type="PROSITE" id="PS51273">
    <property type="entry name" value="GATASE_TYPE_1"/>
    <property type="match status" value="1"/>
</dbReference>
<dbReference type="PROSITE" id="PS51855">
    <property type="entry name" value="MGS"/>
    <property type="match status" value="1"/>
</dbReference>
<sequence length="2275" mass="249540">MPETVGHEEPALPSSPQAGGAVAYNAISKELQPLPPTETANGGIIPPASSRIEGSTGRLCALELEDGTVYQGYNFGAEKSVAGELVFQTGMVGYPESITDPSYRGQILVITFPLVGNYGVPSRETMDELLKTLPKHFESTEIHIAALVVATYAGENYSHFLAESSLGQWLKEQGVPAIHGVDTRALTKRIRQKGSMLGRLLLHKADVAETDAALAQDTWKSSFEQIDWVDPNTKNLVSEVSIREPKLFSPPENVALKHPSSRPIRVLCLDVGLKFNQLRCLVARGVEVLVVPWDYDFPTLAGKDYDGLFVSNGPGDPATMTTTVNNLAKTMQEARTPIFGICLGHQLIARSVGAQTLKMKFGNRGHNIPCTSLVTGKCHITSQNHGYAVDSSTLPSDWQELFVNANDGSNEGIRHVSRPYFSVQFHPESTPGPRDTEYLFDVFINAIKDTIASPEALQKPVNFPGGAVAENIKASPRVSVKKVLILGSGGLSIGQAGEFDYSGSQAIKALKEEGIYTILINPNIATIQTSKGLADKVYFLPVNADFVRKVIKHERPDAIYVTFGGQTALQVGIQLKDEFESLGVKVLGTPIDTIITTEDRELFARSMDSIGEKCAKSASASSLEEALQVVESIGFPVIVRAAYALGGLGSGFADNLDELKDLCAKAFAASPQVLIERSMKGWKEIEYEVVRDARDNCITVCNMENFDPLGIHTGDSIVVAPSQTLSDEDYNMLRTTAVNVIRHLGVVGECNIQYALNPYSKEYCIIEVNARLSRSSALASKATGYPLAFIAAKLGLNIPLNEIKNSVTKVTCACFEPSLDYCVVKIPRWDLKKFTRVSTQLGSSMKSVGEVMAIGRTFEEAIQKAIRSVDFHNLGFNETNALMSIKTELQTPSDQRLFAIANAMAAGYSVDDIWKLTNIDKWFLTRLKGLSDFGKLMTNYNASTVTAPLLRQAKQLGFSDRQLAKFLSSNELAIRRLRVEAGIIPIVKQIDTVAAEFPSVTNYLYLTYNASEHDVRFDDNGIMVLGSGVYRIGSSVEFDWCSVRTIRTLREQGHKTVMVNYNPETVSTDYDEADRLYFENINLETVLDIYQLESSSGVIMSMGGQTPNNIALPLHRLNVRILGTSPEMIDGAENRYKFSRMLDRIGVDQPAWKELTSIEEAREFCDKVGYPVLVRPSYVLSGAAMNTVYSEHDLASYLNQAADVSREHPVVITKYIENAKEIEMDAVARNGVMVGHFISEHVENAGVHSGDATLILPPQDLDPETVRRIEEATRKIGNALNVTGPFNIQFIAKDNDIKVIECNVRASRSFPFVSKVMGVDLIEMATKAMIGAPFAEYPPVTIPKDYVGVKVPQFSFSRLAGADPVLGVEMASTGEVASFGRDKYEAYLKALLSTGFKLPKRNILLSIGSYKEKMEMLPSIIKLRDVGFELFATSGTADFLKENGVPVKYLEILPGEDEDIKSEYSLTQHLANNLIDLYINLPSSNRFRRPANYMSKGYRTRRMAVDYQTPLVTNVKNAKILIEAIARHYALNVQTIDYQTSHRSIILPGLINVGAFVPGLGSADSKDFEAVTKASIAAGFSMIRVMPVGVDSSITDARTLKLVQQNAGKASFCDYNFSVVATSSNSAEVGQLTGEVGSLFIPFNHLSGNISKVAAVTSHFGAWPSSKPIITDAKSTDLASVLLLASLHSRNIHVMSVTSKEDIGLIALSKEKGLKVTCDVSIYCLFLSRDDYPEAAFLPTAEDQKALWEHLSTIDIFSIGSIPYQLAGEKGSPAAGIAEALPLLFTAVSEGRLTVEDIIARLYENPKKIFELHDQSDSSVEVEIDRPYLFQSAQAWSPFSGKSVKGLVQRVIFQGKTSCLDSEITPDAPKGSDMSGHRIVPASPSLKAMSPRVDGALDRRQSISIAGTPARLGRKPVDHFPAATGAELGPPLYTPVPRASSPLLQMLSRSPFKQKHVLSVNQFNRADLHLLFTVAQEMRLGVQREGVLDILKGRLLCTLFYEPSTRTSASFDAAMQRLGGRTIAISTEHSSTKKGETLQDTLRTLGCYGDAVVLRHPEPSSTEVAAKFSPVPVINGGNGSVEHPTQAFLDLFTIREELGTVGGLTITFTGDLKYGRPVHSLIKLLQFYDVRVQLVAPKDLSLPADIRQQLLATGQLLTESEELTPEIVARSDVLYSTRVQKERFADLEQYERLKNSFIIDNALLKHAKSHMVVMHPLPRNAEVSEEVDFDQRAAYFRQVSLQSRGPSSEFDMLMWMQMRYGLYCRMALLALIMAP</sequence>
<keyword id="KW-0067">ATP-binding</keyword>
<keyword id="KW-0378">Hydrolase</keyword>
<keyword id="KW-0436">Ligase</keyword>
<keyword id="KW-0511">Multifunctional enzyme</keyword>
<keyword id="KW-0547">Nucleotide-binding</keyword>
<keyword id="KW-0665">Pyrimidine biosynthesis</keyword>
<keyword id="KW-1185">Reference proteome</keyword>
<keyword id="KW-0677">Repeat</keyword>
<keyword id="KW-0808">Transferase</keyword>
<proteinExistence type="inferred from homology"/>
<comment type="function">
    <text evidence="2">Multifunctional protein that encodes the first 2 enzymatic activities of the de novo pyrimidine pathway: carbamoylphosphate synthetase (CPSase; EC 6.3.5.5) and aspartate transcarbamylase (ATCase; EC 2.1.3.2). The CPSase-function is accomplished in 2 steps, by a glutamine-dependent amidotransferase activity (GATase) that binds and cleaves glutamine to produce ammonia, followed by an ammonium-dependent carbamoyl phosphate synthetase, which reacts with the ammonia, hydrogencarbonate and ATP to form carbamoyl phosphate. The endogenously produced carbamoyl phosphate is sequestered and channeled to the ATCase active site. ATCase then catalyzes the formation of carbamoyl-L-aspartate from L-aspartate and carbamoyl phosphate.</text>
</comment>
<comment type="catalytic activity">
    <reaction evidence="2">
        <text>hydrogencarbonate + L-glutamine + 2 ATP + H2O = carbamoyl phosphate + L-glutamate + 2 ADP + phosphate + 2 H(+)</text>
        <dbReference type="Rhea" id="RHEA:18633"/>
        <dbReference type="ChEBI" id="CHEBI:15377"/>
        <dbReference type="ChEBI" id="CHEBI:15378"/>
        <dbReference type="ChEBI" id="CHEBI:17544"/>
        <dbReference type="ChEBI" id="CHEBI:29985"/>
        <dbReference type="ChEBI" id="CHEBI:30616"/>
        <dbReference type="ChEBI" id="CHEBI:43474"/>
        <dbReference type="ChEBI" id="CHEBI:58228"/>
        <dbReference type="ChEBI" id="CHEBI:58359"/>
        <dbReference type="ChEBI" id="CHEBI:456216"/>
        <dbReference type="EC" id="6.3.5.5"/>
    </reaction>
</comment>
<comment type="catalytic activity">
    <reaction evidence="2">
        <text>L-glutamine + H2O = L-glutamate + NH4(+)</text>
        <dbReference type="Rhea" id="RHEA:15889"/>
        <dbReference type="ChEBI" id="CHEBI:15377"/>
        <dbReference type="ChEBI" id="CHEBI:28938"/>
        <dbReference type="ChEBI" id="CHEBI:29985"/>
        <dbReference type="ChEBI" id="CHEBI:58359"/>
        <dbReference type="EC" id="3.5.1.2"/>
    </reaction>
</comment>
<comment type="catalytic activity">
    <reaction evidence="2">
        <text>hydrogencarbonate + NH4(+) + 2 ATP = carbamoyl phosphate + 2 ADP + phosphate + 2 H(+)</text>
        <dbReference type="Rhea" id="RHEA:18029"/>
        <dbReference type="ChEBI" id="CHEBI:15378"/>
        <dbReference type="ChEBI" id="CHEBI:17544"/>
        <dbReference type="ChEBI" id="CHEBI:28938"/>
        <dbReference type="ChEBI" id="CHEBI:30616"/>
        <dbReference type="ChEBI" id="CHEBI:43474"/>
        <dbReference type="ChEBI" id="CHEBI:58228"/>
        <dbReference type="ChEBI" id="CHEBI:456216"/>
        <dbReference type="EC" id="6.3.4.16"/>
    </reaction>
</comment>
<comment type="catalytic activity">
    <reaction evidence="2">
        <text>carbamoyl phosphate + L-aspartate = N-carbamoyl-L-aspartate + phosphate + H(+)</text>
        <dbReference type="Rhea" id="RHEA:20013"/>
        <dbReference type="ChEBI" id="CHEBI:15378"/>
        <dbReference type="ChEBI" id="CHEBI:29991"/>
        <dbReference type="ChEBI" id="CHEBI:32814"/>
        <dbReference type="ChEBI" id="CHEBI:43474"/>
        <dbReference type="ChEBI" id="CHEBI:58228"/>
        <dbReference type="EC" id="2.1.3.2"/>
    </reaction>
</comment>
<comment type="cofactor">
    <cofactor evidence="6">
        <name>Mg(2+)</name>
        <dbReference type="ChEBI" id="CHEBI:18420"/>
    </cofactor>
    <cofactor evidence="6">
        <name>Mn(2+)</name>
        <dbReference type="ChEBI" id="CHEBI:29035"/>
    </cofactor>
    <text evidence="6">Binds 4 Mg(2+) or Mn(2+) ions per subunit.</text>
</comment>
<comment type="pathway">
    <text evidence="2">Pyrimidine metabolism; UMP biosynthesis via de novo pathway; (S)-dihydroorotate from bicarbonate: step 1/3.</text>
</comment>
<comment type="pathway">
    <text evidence="2">Pyrimidine metabolism; UMP biosynthesis via de novo pathway; (S)-dihydroorotate from bicarbonate: step 2/3.</text>
</comment>
<comment type="domain">
    <text evidence="11">The DHOase domain is defective. The third step of the de novo pyrimidine pathway, dihydroorotase (DHOase) is encoded by the pyrD gene which is both physically and genetically independent of the pyrABCN gene.</text>
</comment>
<comment type="miscellaneous">
    <text evidence="10">In eukaryotes, carbamoyl phosphate synthase is synthesized by 2 pathway-specific (arginine and pyrimidine) genes under separate control.</text>
</comment>
<comment type="miscellaneous">
    <text evidence="2">GATase (glutamine amidotransferase) and CPSase (carbamoyl phosphate synthase) form together the glutamine-dependent CPSase (CPSase P) (EC 6.3.5.5).</text>
</comment>
<comment type="similarity">
    <text evidence="10">In the central section; belongs to the metallo-dependent hydrolases superfamily. DHOase family. CAD subfamily.</text>
</comment>
<comment type="similarity">
    <text evidence="10">In the N-terminal section; belongs to the CarA family.</text>
</comment>
<comment type="similarity">
    <text evidence="10">In the 2nd section; belongs to the CarB family.</text>
</comment>
<comment type="similarity">
    <text evidence="10">In the 3rd section; belongs to the metallo-dependent hydrolases superfamily. DHOase family. CAD subfamily.</text>
</comment>
<comment type="similarity">
    <text evidence="10">In the C-terminal section; belongs to the aspartate/ornithine carbamoyltransferase superfamily. ATCase family.</text>
</comment>
<feature type="chain" id="PRO_0000199509" description="Multifunctional protein pyrABCN">
    <location>
        <begin position="1"/>
        <end position="2275"/>
    </location>
</feature>
<feature type="domain" description="Glutamine amidotransferase type-1" evidence="7">
    <location>
        <begin position="265"/>
        <end position="453"/>
    </location>
</feature>
<feature type="domain" description="ATP-grasp 1" evidence="6">
    <location>
        <begin position="604"/>
        <end position="796"/>
    </location>
</feature>
<feature type="domain" description="ATP-grasp 2" evidence="6">
    <location>
        <begin position="1139"/>
        <end position="1330"/>
    </location>
</feature>
<feature type="domain" description="MGS-like" evidence="8">
    <location>
        <begin position="1396"/>
        <end position="1575"/>
    </location>
</feature>
<feature type="region of interest" description="GATase (Glutamine amidotransferase)" evidence="3">
    <location>
        <begin position="1"/>
        <end position="440"/>
    </location>
</feature>
<feature type="region of interest" description="Linker" evidence="3">
    <location>
        <begin position="441"/>
        <end position="482"/>
    </location>
</feature>
<feature type="region of interest" description="CPSase (Carbamoyl-phosphate synthase)" evidence="3">
    <location>
        <begin position="483"/>
        <end position="1522"/>
    </location>
</feature>
<feature type="region of interest" description="Linker" evidence="3">
    <location>
        <begin position="1523"/>
        <end position="1532"/>
    </location>
</feature>
<feature type="region of interest" description="Defective DHOase domain" evidence="3">
    <location>
        <begin position="1533"/>
        <end position="1862"/>
    </location>
</feature>
<feature type="region of interest" description="Linker" evidence="3">
    <location>
        <begin position="1863"/>
        <end position="1953"/>
    </location>
</feature>
<feature type="region of interest" description="Disordered" evidence="9">
    <location>
        <begin position="1863"/>
        <end position="1882"/>
    </location>
</feature>
<feature type="region of interest" description="ATCase (Aspartate transcarbamylase)" evidence="3">
    <location>
        <begin position="1954"/>
        <end position="2258"/>
    </location>
</feature>
<feature type="active site" description="Nucleophile; for GATase activity" evidence="7">
    <location>
        <position position="342"/>
    </location>
</feature>
<feature type="active site" description="For GATase activity" evidence="7">
    <location>
        <position position="426"/>
    </location>
</feature>
<feature type="active site" description="For GATase activity" evidence="7">
    <location>
        <position position="428"/>
    </location>
</feature>
<feature type="binding site" evidence="4">
    <location>
        <position position="102"/>
    </location>
    <ligand>
        <name>L-glutamine</name>
        <dbReference type="ChEBI" id="CHEBI:58359"/>
    </ligand>
</feature>
<feature type="binding site" evidence="4">
    <location>
        <position position="313"/>
    </location>
    <ligand>
        <name>L-glutamine</name>
        <dbReference type="ChEBI" id="CHEBI:58359"/>
    </ligand>
</feature>
<feature type="binding site" evidence="4">
    <location>
        <position position="315"/>
    </location>
    <ligand>
        <name>L-glutamine</name>
        <dbReference type="ChEBI" id="CHEBI:58359"/>
    </ligand>
</feature>
<feature type="binding site" evidence="4">
    <location>
        <position position="343"/>
    </location>
    <ligand>
        <name>L-glutamine</name>
        <dbReference type="ChEBI" id="CHEBI:58359"/>
    </ligand>
</feature>
<feature type="binding site" evidence="4">
    <location>
        <position position="346"/>
    </location>
    <ligand>
        <name>L-glutamine</name>
        <dbReference type="ChEBI" id="CHEBI:58359"/>
    </ligand>
</feature>
<feature type="binding site" evidence="4">
    <location>
        <position position="384"/>
    </location>
    <ligand>
        <name>L-glutamine</name>
        <dbReference type="ChEBI" id="CHEBI:58359"/>
    </ligand>
</feature>
<feature type="binding site" evidence="4">
    <location>
        <position position="386"/>
    </location>
    <ligand>
        <name>L-glutamine</name>
        <dbReference type="ChEBI" id="CHEBI:58359"/>
    </ligand>
</feature>
<feature type="binding site" evidence="4">
    <location>
        <position position="387"/>
    </location>
    <ligand>
        <name>L-glutamine</name>
        <dbReference type="ChEBI" id="CHEBI:58359"/>
    </ligand>
</feature>
<feature type="binding site" evidence="1">
    <location>
        <position position="600"/>
    </location>
    <ligand>
        <name>ATP</name>
        <dbReference type="ChEBI" id="CHEBI:30616"/>
        <label>1</label>
    </ligand>
</feature>
<feature type="binding site" evidence="1">
    <location>
        <position position="640"/>
    </location>
    <ligand>
        <name>ATP</name>
        <dbReference type="ChEBI" id="CHEBI:30616"/>
        <label>1</label>
    </ligand>
</feature>
<feature type="binding site" evidence="1">
    <location>
        <position position="646"/>
    </location>
    <ligand>
        <name>ATP</name>
        <dbReference type="ChEBI" id="CHEBI:30616"/>
        <label>1</label>
    </ligand>
</feature>
<feature type="binding site" evidence="1">
    <location>
        <position position="647"/>
    </location>
    <ligand>
        <name>ATP</name>
        <dbReference type="ChEBI" id="CHEBI:30616"/>
        <label>1</label>
    </ligand>
</feature>
<feature type="binding site" evidence="1">
    <location>
        <position position="677"/>
    </location>
    <ligand>
        <name>ATP</name>
        <dbReference type="ChEBI" id="CHEBI:30616"/>
        <label>1</label>
    </ligand>
</feature>
<feature type="binding site" evidence="1">
    <location>
        <position position="679"/>
    </location>
    <ligand>
        <name>ATP</name>
        <dbReference type="ChEBI" id="CHEBI:30616"/>
        <label>1</label>
    </ligand>
</feature>
<feature type="binding site" evidence="1">
    <location>
        <position position="684"/>
    </location>
    <ligand>
        <name>ATP</name>
        <dbReference type="ChEBI" id="CHEBI:30616"/>
        <label>1</label>
    </ligand>
</feature>
<feature type="binding site" evidence="1">
    <location>
        <position position="710"/>
    </location>
    <ligand>
        <name>ATP</name>
        <dbReference type="ChEBI" id="CHEBI:30616"/>
        <label>1</label>
    </ligand>
</feature>
<feature type="binding site" evidence="1">
    <location>
        <position position="711"/>
    </location>
    <ligand>
        <name>ATP</name>
        <dbReference type="ChEBI" id="CHEBI:30616"/>
        <label>1</label>
    </ligand>
</feature>
<feature type="binding site" evidence="1">
    <location>
        <position position="712"/>
    </location>
    <ligand>
        <name>ATP</name>
        <dbReference type="ChEBI" id="CHEBI:30616"/>
        <label>1</label>
    </ligand>
</feature>
<feature type="binding site" evidence="1">
    <location>
        <position position="753"/>
    </location>
    <ligand>
        <name>ATP</name>
        <dbReference type="ChEBI" id="CHEBI:30616"/>
        <label>1</label>
    </ligand>
</feature>
<feature type="binding site" evidence="6">
    <location>
        <position position="753"/>
    </location>
    <ligand>
        <name>Mg(2+)</name>
        <dbReference type="ChEBI" id="CHEBI:18420"/>
        <label>1</label>
    </ligand>
</feature>
<feature type="binding site" evidence="6">
    <location>
        <position position="753"/>
    </location>
    <ligand>
        <name>Mn(2+)</name>
        <dbReference type="ChEBI" id="CHEBI:29035"/>
        <label>1</label>
    </ligand>
</feature>
<feature type="binding site" evidence="1">
    <location>
        <position position="767"/>
    </location>
    <ligand>
        <name>ATP</name>
        <dbReference type="ChEBI" id="CHEBI:30616"/>
        <label>1</label>
    </ligand>
</feature>
<feature type="binding site" evidence="6">
    <location>
        <position position="767"/>
    </location>
    <ligand>
        <name>Mg(2+)</name>
        <dbReference type="ChEBI" id="CHEBI:18420"/>
        <label>1</label>
    </ligand>
</feature>
<feature type="binding site" evidence="6">
    <location>
        <position position="767"/>
    </location>
    <ligand>
        <name>Mg(2+)</name>
        <dbReference type="ChEBI" id="CHEBI:18420"/>
        <label>2</label>
    </ligand>
</feature>
<feature type="binding site" evidence="6">
    <location>
        <position position="767"/>
    </location>
    <ligand>
        <name>Mn(2+)</name>
        <dbReference type="ChEBI" id="CHEBI:29035"/>
        <label>1</label>
    </ligand>
</feature>
<feature type="binding site" evidence="6">
    <location>
        <position position="767"/>
    </location>
    <ligand>
        <name>Mn(2+)</name>
        <dbReference type="ChEBI" id="CHEBI:29035"/>
        <label>2</label>
    </ligand>
</feature>
<feature type="binding site" evidence="6">
    <location>
        <position position="769"/>
    </location>
    <ligand>
        <name>Mg(2+)</name>
        <dbReference type="ChEBI" id="CHEBI:18420"/>
        <label>2</label>
    </ligand>
</feature>
<feature type="binding site" evidence="6">
    <location>
        <position position="769"/>
    </location>
    <ligand>
        <name>Mn(2+)</name>
        <dbReference type="ChEBI" id="CHEBI:29035"/>
        <label>2</label>
    </ligand>
</feature>
<feature type="binding site" evidence="1">
    <location>
        <position position="1175"/>
    </location>
    <ligand>
        <name>ATP</name>
        <dbReference type="ChEBI" id="CHEBI:30616"/>
        <label>2</label>
    </ligand>
</feature>
<feature type="binding site" evidence="1">
    <location>
        <position position="1214"/>
    </location>
    <ligand>
        <name>ATP</name>
        <dbReference type="ChEBI" id="CHEBI:30616"/>
        <label>2</label>
    </ligand>
</feature>
<feature type="binding site" evidence="1">
    <location>
        <position position="1216"/>
    </location>
    <ligand>
        <name>ATP</name>
        <dbReference type="ChEBI" id="CHEBI:30616"/>
        <label>2</label>
    </ligand>
</feature>
<feature type="binding site" evidence="1">
    <location>
        <position position="1221"/>
    </location>
    <ligand>
        <name>ATP</name>
        <dbReference type="ChEBI" id="CHEBI:30616"/>
        <label>2</label>
    </ligand>
</feature>
<feature type="binding site" evidence="1">
    <location>
        <position position="1246"/>
    </location>
    <ligand>
        <name>ATP</name>
        <dbReference type="ChEBI" id="CHEBI:30616"/>
        <label>2</label>
    </ligand>
</feature>
<feature type="binding site" evidence="1">
    <location>
        <position position="1247"/>
    </location>
    <ligand>
        <name>ATP</name>
        <dbReference type="ChEBI" id="CHEBI:30616"/>
        <label>2</label>
    </ligand>
</feature>
<feature type="binding site" evidence="1">
    <location>
        <position position="1248"/>
    </location>
    <ligand>
        <name>ATP</name>
        <dbReference type="ChEBI" id="CHEBI:30616"/>
        <label>2</label>
    </ligand>
</feature>
<feature type="binding site" evidence="1">
    <location>
        <position position="1249"/>
    </location>
    <ligand>
        <name>ATP</name>
        <dbReference type="ChEBI" id="CHEBI:30616"/>
        <label>2</label>
    </ligand>
</feature>
<feature type="binding site" evidence="1">
    <location>
        <position position="1289"/>
    </location>
    <ligand>
        <name>ATP</name>
        <dbReference type="ChEBI" id="CHEBI:30616"/>
        <label>2</label>
    </ligand>
</feature>
<feature type="binding site" evidence="6">
    <location>
        <position position="1289"/>
    </location>
    <ligand>
        <name>Mg(2+)</name>
        <dbReference type="ChEBI" id="CHEBI:18420"/>
        <label>3</label>
    </ligand>
</feature>
<feature type="binding site" evidence="6">
    <location>
        <position position="1289"/>
    </location>
    <ligand>
        <name>Mn(2+)</name>
        <dbReference type="ChEBI" id="CHEBI:29035"/>
        <label>3</label>
    </ligand>
</feature>
<feature type="binding site" evidence="1">
    <location>
        <position position="1301"/>
    </location>
    <ligand>
        <name>ATP</name>
        <dbReference type="ChEBI" id="CHEBI:30616"/>
        <label>2</label>
    </ligand>
</feature>
<feature type="binding site" evidence="6">
    <location>
        <position position="1301"/>
    </location>
    <ligand>
        <name>Mg(2+)</name>
        <dbReference type="ChEBI" id="CHEBI:18420"/>
        <label>3</label>
    </ligand>
</feature>
<feature type="binding site" evidence="6">
    <location>
        <position position="1301"/>
    </location>
    <ligand>
        <name>Mg(2+)</name>
        <dbReference type="ChEBI" id="CHEBI:18420"/>
        <label>4</label>
    </ligand>
</feature>
<feature type="binding site" evidence="6">
    <location>
        <position position="1301"/>
    </location>
    <ligand>
        <name>Mn(2+)</name>
        <dbReference type="ChEBI" id="CHEBI:29035"/>
        <label>3</label>
    </ligand>
</feature>
<feature type="binding site" evidence="6">
    <location>
        <position position="1301"/>
    </location>
    <ligand>
        <name>Mn(2+)</name>
        <dbReference type="ChEBI" id="CHEBI:29035"/>
        <label>4</label>
    </ligand>
</feature>
<feature type="binding site" evidence="6">
    <location>
        <position position="1303"/>
    </location>
    <ligand>
        <name>Mg(2+)</name>
        <dbReference type="ChEBI" id="CHEBI:18420"/>
        <label>4</label>
    </ligand>
</feature>
<feature type="binding site" evidence="6">
    <location>
        <position position="1303"/>
    </location>
    <ligand>
        <name>Mn(2+)</name>
        <dbReference type="ChEBI" id="CHEBI:29035"/>
        <label>4</label>
    </ligand>
</feature>
<feature type="binding site" evidence="5">
    <location>
        <position position="2006"/>
    </location>
    <ligand>
        <name>carbamoyl phosphate</name>
        <dbReference type="ChEBI" id="CHEBI:58228"/>
    </ligand>
</feature>
<feature type="binding site" evidence="5">
    <location>
        <position position="2007"/>
    </location>
    <ligand>
        <name>carbamoyl phosphate</name>
        <dbReference type="ChEBI" id="CHEBI:58228"/>
    </ligand>
</feature>
<feature type="binding site" evidence="5">
    <location>
        <position position="2034"/>
    </location>
    <ligand>
        <name>L-aspartate</name>
        <dbReference type="ChEBI" id="CHEBI:29991"/>
    </ligand>
</feature>
<feature type="binding site" evidence="5">
    <location>
        <position position="2055"/>
    </location>
    <ligand>
        <name>carbamoyl phosphate</name>
        <dbReference type="ChEBI" id="CHEBI:58228"/>
    </ligand>
</feature>
<feature type="binding site" evidence="5">
    <location>
        <position position="2083"/>
    </location>
    <ligand>
        <name>carbamoyl phosphate</name>
        <dbReference type="ChEBI" id="CHEBI:58228"/>
    </ligand>
</feature>
<feature type="binding site" evidence="5">
    <location>
        <position position="2086"/>
    </location>
    <ligand>
        <name>carbamoyl phosphate</name>
        <dbReference type="ChEBI" id="CHEBI:58228"/>
    </ligand>
</feature>
<feature type="binding site" evidence="5">
    <location>
        <position position="2116"/>
    </location>
    <ligand>
        <name>L-aspartate</name>
        <dbReference type="ChEBI" id="CHEBI:29991"/>
    </ligand>
</feature>
<feature type="binding site" evidence="5">
    <location>
        <position position="2178"/>
    </location>
    <ligand>
        <name>L-aspartate</name>
        <dbReference type="ChEBI" id="CHEBI:29991"/>
    </ligand>
</feature>
<feature type="binding site" evidence="5">
    <location>
        <position position="2217"/>
    </location>
    <ligand>
        <name>carbamoyl phosphate</name>
        <dbReference type="ChEBI" id="CHEBI:58228"/>
    </ligand>
</feature>
<feature type="binding site" evidence="5">
    <location>
        <position position="2218"/>
    </location>
    <ligand>
        <name>carbamoyl phosphate</name>
        <dbReference type="ChEBI" id="CHEBI:58228"/>
    </ligand>
</feature>
<feature type="sequence conflict" description="In Ref. 1; AAD09129." evidence="10" ref="1">
    <original>G</original>
    <variation>R</variation>
    <location>
        <position position="19"/>
    </location>
</feature>
<feature type="sequence conflict" description="In Ref. 1; AAD09129." evidence="10" ref="1">
    <original>WL</original>
    <variation>CV</variation>
    <location>
        <begin position="169"/>
        <end position="170"/>
    </location>
</feature>
<feature type="sequence conflict" description="In Ref. 1; AAD09129." evidence="10" ref="1">
    <original>V</original>
    <variation>D</variation>
    <location>
        <position position="403"/>
    </location>
</feature>
<feature type="sequence conflict" description="In Ref. 1; AAD09129." evidence="10" ref="1">
    <original>P</original>
    <variation>A</variation>
    <location>
        <position position="454"/>
    </location>
</feature>
<feature type="sequence conflict" description="In Ref. 1; AAD09129." evidence="10" ref="1">
    <original>SV</original>
    <variation>RL</variation>
    <location>
        <begin position="909"/>
        <end position="910"/>
    </location>
</feature>
<feature type="sequence conflict" description="In Ref. 1; AAD09129." evidence="10" ref="1">
    <original>T</original>
    <variation>A</variation>
    <location>
        <position position="1007"/>
    </location>
</feature>
<feature type="sequence conflict" description="In Ref. 1; AAD09129." evidence="10" ref="1">
    <original>A</original>
    <variation>R</variation>
    <location>
        <position position="1741"/>
    </location>
</feature>
<feature type="sequence conflict" description="In Ref. 1; AAD09129." evidence="10" ref="1">
    <original>A</original>
    <variation>V</variation>
    <location>
        <position position="2013"/>
    </location>
</feature>
<feature type="sequence conflict" description="In Ref. 1; AAD09129." evidence="10" ref="1">
    <original>Q</original>
    <variation>L</variation>
    <location>
        <position position="2238"/>
    </location>
</feature>
<feature type="sequence conflict" description="In Ref. 1; AAD09129." evidence="10" ref="1">
    <original>LA</original>
    <variation>IE</variation>
    <location>
        <begin position="2269"/>
        <end position="2270"/>
    </location>
</feature>
<reference evidence="12" key="1">
    <citation type="journal article" date="1999" name="Mol. Microbiol.">
        <title>Structural and transcriptional analysis of the pyrABCN, pyrD and pyrF genes in Aspergillus nidulans and the evolutionary origin of fungal dihydroorotases.</title>
        <authorList>
            <person name="Aleksenko A."/>
            <person name="Liu W."/>
            <person name="Gojkovic Z."/>
            <person name="Nielsen J."/>
            <person name="Piskur J."/>
        </authorList>
    </citation>
    <scope>NUCLEOTIDE SEQUENCE [GENOMIC DNA]</scope>
    <source>
        <strain>FGSC A4 / ATCC 38163 / CBS 112.46 / NRRL 194 / M139</strain>
    </source>
</reference>
<reference key="2">
    <citation type="journal article" date="2005" name="Nature">
        <title>Sequencing of Aspergillus nidulans and comparative analysis with A. fumigatus and A. oryzae.</title>
        <authorList>
            <person name="Galagan J.E."/>
            <person name="Calvo S.E."/>
            <person name="Cuomo C."/>
            <person name="Ma L.-J."/>
            <person name="Wortman J.R."/>
            <person name="Batzoglou S."/>
            <person name="Lee S.-I."/>
            <person name="Bastuerkmen M."/>
            <person name="Spevak C.C."/>
            <person name="Clutterbuck J."/>
            <person name="Kapitonov V."/>
            <person name="Jurka J."/>
            <person name="Scazzocchio C."/>
            <person name="Farman M.L."/>
            <person name="Butler J."/>
            <person name="Purcell S."/>
            <person name="Harris S."/>
            <person name="Braus G.H."/>
            <person name="Draht O."/>
            <person name="Busch S."/>
            <person name="D'Enfert C."/>
            <person name="Bouchier C."/>
            <person name="Goldman G.H."/>
            <person name="Bell-Pedersen D."/>
            <person name="Griffiths-Jones S."/>
            <person name="Doonan J.H."/>
            <person name="Yu J."/>
            <person name="Vienken K."/>
            <person name="Pain A."/>
            <person name="Freitag M."/>
            <person name="Selker E.U."/>
            <person name="Archer D.B."/>
            <person name="Penalva M.A."/>
            <person name="Oakley B.R."/>
            <person name="Momany M."/>
            <person name="Tanaka T."/>
            <person name="Kumagai T."/>
            <person name="Asai K."/>
            <person name="Machida M."/>
            <person name="Nierman W.C."/>
            <person name="Denning D.W."/>
            <person name="Caddick M.X."/>
            <person name="Hynes M."/>
            <person name="Paoletti M."/>
            <person name="Fischer R."/>
            <person name="Miller B.L."/>
            <person name="Dyer P.S."/>
            <person name="Sachs M.S."/>
            <person name="Osmani S.A."/>
            <person name="Birren B.W."/>
        </authorList>
    </citation>
    <scope>NUCLEOTIDE SEQUENCE [LARGE SCALE GENOMIC DNA]</scope>
    <source>
        <strain>FGSC A4 / ATCC 38163 / CBS 112.46 / NRRL 194 / M139</strain>
    </source>
</reference>
<reference key="3">
    <citation type="journal article" date="2009" name="Fungal Genet. Biol.">
        <title>The 2008 update of the Aspergillus nidulans genome annotation: a community effort.</title>
        <authorList>
            <person name="Wortman J.R."/>
            <person name="Gilsenan J.M."/>
            <person name="Joardar V."/>
            <person name="Deegan J."/>
            <person name="Clutterbuck J."/>
            <person name="Andersen M.R."/>
            <person name="Archer D."/>
            <person name="Bencina M."/>
            <person name="Braus G."/>
            <person name="Coutinho P."/>
            <person name="von Dohren H."/>
            <person name="Doonan J."/>
            <person name="Driessen A.J."/>
            <person name="Durek P."/>
            <person name="Espeso E."/>
            <person name="Fekete E."/>
            <person name="Flipphi M."/>
            <person name="Estrada C.G."/>
            <person name="Geysens S."/>
            <person name="Goldman G."/>
            <person name="de Groot P.W."/>
            <person name="Hansen K."/>
            <person name="Harris S.D."/>
            <person name="Heinekamp T."/>
            <person name="Helmstaedt K."/>
            <person name="Henrissat B."/>
            <person name="Hofmann G."/>
            <person name="Homan T."/>
            <person name="Horio T."/>
            <person name="Horiuchi H."/>
            <person name="James S."/>
            <person name="Jones M."/>
            <person name="Karaffa L."/>
            <person name="Karanyi Z."/>
            <person name="Kato M."/>
            <person name="Keller N."/>
            <person name="Kelly D.E."/>
            <person name="Kiel J.A."/>
            <person name="Kim J.M."/>
            <person name="van der Klei I.J."/>
            <person name="Klis F.M."/>
            <person name="Kovalchuk A."/>
            <person name="Krasevec N."/>
            <person name="Kubicek C.P."/>
            <person name="Liu B."/>
            <person name="Maccabe A."/>
            <person name="Meyer V."/>
            <person name="Mirabito P."/>
            <person name="Miskei M."/>
            <person name="Mos M."/>
            <person name="Mullins J."/>
            <person name="Nelson D.R."/>
            <person name="Nielsen J."/>
            <person name="Oakley B.R."/>
            <person name="Osmani S.A."/>
            <person name="Pakula T."/>
            <person name="Paszewski A."/>
            <person name="Paulsen I."/>
            <person name="Pilsyk S."/>
            <person name="Pocsi I."/>
            <person name="Punt P.J."/>
            <person name="Ram A.F."/>
            <person name="Ren Q."/>
            <person name="Robellet X."/>
            <person name="Robson G."/>
            <person name="Seiboth B."/>
            <person name="van Solingen P."/>
            <person name="Specht T."/>
            <person name="Sun J."/>
            <person name="Taheri-Talesh N."/>
            <person name="Takeshita N."/>
            <person name="Ussery D."/>
            <person name="vanKuyk P.A."/>
            <person name="Visser H."/>
            <person name="van de Vondervoort P.J."/>
            <person name="de Vries R.P."/>
            <person name="Walton J."/>
            <person name="Xiang X."/>
            <person name="Xiong Y."/>
            <person name="Zeng A.P."/>
            <person name="Brandt B.W."/>
            <person name="Cornell M.J."/>
            <person name="van den Hondel C.A."/>
            <person name="Visser J."/>
            <person name="Oliver S.G."/>
            <person name="Turner G."/>
        </authorList>
    </citation>
    <scope>GENOME REANNOTATION</scope>
    <source>
        <strain>FGSC A4 / ATCC 38163 / CBS 112.46 / NRRL 194 / M139</strain>
    </source>
</reference>